<protein>
    <recommendedName>
        <fullName evidence="1">NAD(P)H-quinone oxidoreductase subunit O</fullName>
        <ecNumber evidence="1">7.1.1.-</ecNumber>
    </recommendedName>
    <alternativeName>
        <fullName evidence="1">NAD(P)H dehydrogenase I subunit O</fullName>
    </alternativeName>
    <alternativeName>
        <fullName>NDH-1 subunit O</fullName>
    </alternativeName>
    <alternativeName>
        <fullName>NDH-O</fullName>
    </alternativeName>
</protein>
<name>NDHO_GLOVI</name>
<keyword id="KW-0997">Cell inner membrane</keyword>
<keyword id="KW-1003">Cell membrane</keyword>
<keyword id="KW-0472">Membrane</keyword>
<keyword id="KW-0520">NAD</keyword>
<keyword id="KW-0521">NADP</keyword>
<keyword id="KW-0618">Plastoquinone</keyword>
<keyword id="KW-0874">Quinone</keyword>
<keyword id="KW-1185">Reference proteome</keyword>
<keyword id="KW-1278">Translocase</keyword>
<keyword id="KW-0813">Transport</keyword>
<gene>
    <name evidence="1" type="primary">ndhO</name>
    <name type="ordered locus">gsl3544</name>
</gene>
<sequence>MPIKKGSLVRAVRDKLDNSLEALANDTRWPSYLFETDGEVLDMRGDYALIKFGAVPTPPVWLRQDQLAESGAAAESTS</sequence>
<organism>
    <name type="scientific">Gloeobacter violaceus (strain ATCC 29082 / PCC 7421)</name>
    <dbReference type="NCBI Taxonomy" id="251221"/>
    <lineage>
        <taxon>Bacteria</taxon>
        <taxon>Bacillati</taxon>
        <taxon>Cyanobacteriota</taxon>
        <taxon>Cyanophyceae</taxon>
        <taxon>Gloeobacterales</taxon>
        <taxon>Gloeobacteraceae</taxon>
        <taxon>Gloeobacter</taxon>
    </lineage>
</organism>
<accession>Q7NFI1</accession>
<comment type="function">
    <text evidence="1">NDH-1 shuttles electrons from an unknown electron donor, via FMN and iron-sulfur (Fe-S) centers, to quinones in the respiratory and/or the photosynthetic chain. The immediate electron acceptor for the enzyme in this species is believed to be plastoquinone. Couples the redox reaction to proton translocation, and thus conserves the redox energy in a proton gradient. Cyanobacterial NDH-1 also plays a role in inorganic carbon-concentration.</text>
</comment>
<comment type="catalytic activity">
    <reaction evidence="1">
        <text>a plastoquinone + NADH + (n+1) H(+)(in) = a plastoquinol + NAD(+) + n H(+)(out)</text>
        <dbReference type="Rhea" id="RHEA:42608"/>
        <dbReference type="Rhea" id="RHEA-COMP:9561"/>
        <dbReference type="Rhea" id="RHEA-COMP:9562"/>
        <dbReference type="ChEBI" id="CHEBI:15378"/>
        <dbReference type="ChEBI" id="CHEBI:17757"/>
        <dbReference type="ChEBI" id="CHEBI:57540"/>
        <dbReference type="ChEBI" id="CHEBI:57945"/>
        <dbReference type="ChEBI" id="CHEBI:62192"/>
    </reaction>
</comment>
<comment type="catalytic activity">
    <reaction evidence="1">
        <text>a plastoquinone + NADPH + (n+1) H(+)(in) = a plastoquinol + NADP(+) + n H(+)(out)</text>
        <dbReference type="Rhea" id="RHEA:42612"/>
        <dbReference type="Rhea" id="RHEA-COMP:9561"/>
        <dbReference type="Rhea" id="RHEA-COMP:9562"/>
        <dbReference type="ChEBI" id="CHEBI:15378"/>
        <dbReference type="ChEBI" id="CHEBI:17757"/>
        <dbReference type="ChEBI" id="CHEBI:57783"/>
        <dbReference type="ChEBI" id="CHEBI:58349"/>
        <dbReference type="ChEBI" id="CHEBI:62192"/>
    </reaction>
</comment>
<comment type="subunit">
    <text evidence="1">NDH-1 can be composed of about 15 different subunits; different subcomplexes with different compositions have been identified which probably have different functions.</text>
</comment>
<comment type="subcellular location">
    <subcellularLocation>
        <location evidence="1">Cell inner membrane</location>
        <topology evidence="1">Peripheral membrane protein</topology>
        <orientation evidence="1">Cytoplasmic side</orientation>
    </subcellularLocation>
</comment>
<comment type="similarity">
    <text evidence="1">Belongs to the complex I NdhO subunit family.</text>
</comment>
<dbReference type="EC" id="7.1.1.-" evidence="1"/>
<dbReference type="EMBL" id="BA000045">
    <property type="protein sequence ID" value="BAC91485.1"/>
    <property type="molecule type" value="Genomic_DNA"/>
</dbReference>
<dbReference type="RefSeq" id="NP_926490.1">
    <property type="nucleotide sequence ID" value="NC_005125.1"/>
</dbReference>
<dbReference type="RefSeq" id="WP_011143533.1">
    <property type="nucleotide sequence ID" value="NC_005125.1"/>
</dbReference>
<dbReference type="SMR" id="Q7NFI1"/>
<dbReference type="STRING" id="251221.gene:10761057"/>
<dbReference type="EnsemblBacteria" id="BAC91485">
    <property type="protein sequence ID" value="BAC91485"/>
    <property type="gene ID" value="BAC91485"/>
</dbReference>
<dbReference type="KEGG" id="gvi:gsl3544"/>
<dbReference type="PATRIC" id="fig|251221.4.peg.3577"/>
<dbReference type="eggNOG" id="ENOG5032XZT">
    <property type="taxonomic scope" value="Bacteria"/>
</dbReference>
<dbReference type="HOGENOM" id="CLU_195299_0_0_3"/>
<dbReference type="InParanoid" id="Q7NFI1"/>
<dbReference type="OrthoDB" id="426633at2"/>
<dbReference type="PhylomeDB" id="Q7NFI1"/>
<dbReference type="Proteomes" id="UP000000557">
    <property type="component" value="Chromosome"/>
</dbReference>
<dbReference type="GO" id="GO:0005886">
    <property type="term" value="C:plasma membrane"/>
    <property type="evidence" value="ECO:0007669"/>
    <property type="project" value="UniProtKB-SubCell"/>
</dbReference>
<dbReference type="GO" id="GO:0016655">
    <property type="term" value="F:oxidoreductase activity, acting on NAD(P)H, quinone or similar compound as acceptor"/>
    <property type="evidence" value="ECO:0007669"/>
    <property type="project" value="UniProtKB-UniRule"/>
</dbReference>
<dbReference type="GO" id="GO:0048038">
    <property type="term" value="F:quinone binding"/>
    <property type="evidence" value="ECO:0007669"/>
    <property type="project" value="UniProtKB-KW"/>
</dbReference>
<dbReference type="HAMAP" id="MF_01354">
    <property type="entry name" value="NDH1_NDH1O"/>
    <property type="match status" value="1"/>
</dbReference>
<dbReference type="InterPro" id="IPR020905">
    <property type="entry name" value="NdhO"/>
</dbReference>
<dbReference type="Pfam" id="PF11910">
    <property type="entry name" value="NdhO"/>
    <property type="match status" value="1"/>
</dbReference>
<reference key="1">
    <citation type="journal article" date="2003" name="DNA Res.">
        <title>Complete genome structure of Gloeobacter violaceus PCC 7421, a cyanobacterium that lacks thylakoids.</title>
        <authorList>
            <person name="Nakamura Y."/>
            <person name="Kaneko T."/>
            <person name="Sato S."/>
            <person name="Mimuro M."/>
            <person name="Miyashita H."/>
            <person name="Tsuchiya T."/>
            <person name="Sasamoto S."/>
            <person name="Watanabe A."/>
            <person name="Kawashima K."/>
            <person name="Kishida Y."/>
            <person name="Kiyokawa C."/>
            <person name="Kohara M."/>
            <person name="Matsumoto M."/>
            <person name="Matsuno A."/>
            <person name="Nakazaki N."/>
            <person name="Shimpo S."/>
            <person name="Takeuchi C."/>
            <person name="Yamada M."/>
            <person name="Tabata S."/>
        </authorList>
    </citation>
    <scope>NUCLEOTIDE SEQUENCE [LARGE SCALE GENOMIC DNA]</scope>
    <source>
        <strain>ATCC 29082 / PCC 7421</strain>
    </source>
</reference>
<evidence type="ECO:0000255" key="1">
    <source>
        <dbReference type="HAMAP-Rule" id="MF_01354"/>
    </source>
</evidence>
<proteinExistence type="inferred from homology"/>
<feature type="chain" id="PRO_0000353635" description="NAD(P)H-quinone oxidoreductase subunit O">
    <location>
        <begin position="1"/>
        <end position="78"/>
    </location>
</feature>